<keyword id="KW-0687">Ribonucleoprotein</keyword>
<keyword id="KW-0689">Ribosomal protein</keyword>
<organism>
    <name type="scientific">Chlamydia felis (strain Fe/C-56)</name>
    <name type="common">Chlamydophila felis</name>
    <dbReference type="NCBI Taxonomy" id="264202"/>
    <lineage>
        <taxon>Bacteria</taxon>
        <taxon>Pseudomonadati</taxon>
        <taxon>Chlamydiota</taxon>
        <taxon>Chlamydiia</taxon>
        <taxon>Chlamydiales</taxon>
        <taxon>Chlamydiaceae</taxon>
        <taxon>Chlamydia/Chlamydophila group</taxon>
        <taxon>Chlamydia</taxon>
    </lineage>
</organism>
<sequence length="105" mass="11826">MKQQKQKIRIRLKGFDQGQLDRSTADIVETAKRTGARVAGPIPLPTKREVYTVLRSPHVDKKSREQFEIRTHKRLIDILDPTGKTIDALKMLALPAGVDIKIKAA</sequence>
<dbReference type="EMBL" id="AP006861">
    <property type="protein sequence ID" value="BAE81586.1"/>
    <property type="status" value="ALT_INIT"/>
    <property type="molecule type" value="Genomic_DNA"/>
</dbReference>
<dbReference type="RefSeq" id="WP_006342871.1">
    <property type="nucleotide sequence ID" value="NC_007899.1"/>
</dbReference>
<dbReference type="SMR" id="Q253F2"/>
<dbReference type="STRING" id="264202.CF0814"/>
<dbReference type="GeneID" id="93024745"/>
<dbReference type="KEGG" id="cfe:CF0814"/>
<dbReference type="eggNOG" id="COG0051">
    <property type="taxonomic scope" value="Bacteria"/>
</dbReference>
<dbReference type="HOGENOM" id="CLU_122625_1_2_0"/>
<dbReference type="OrthoDB" id="9804464at2"/>
<dbReference type="Proteomes" id="UP000001260">
    <property type="component" value="Chromosome"/>
</dbReference>
<dbReference type="GO" id="GO:1990904">
    <property type="term" value="C:ribonucleoprotein complex"/>
    <property type="evidence" value="ECO:0007669"/>
    <property type="project" value="UniProtKB-KW"/>
</dbReference>
<dbReference type="GO" id="GO:0005840">
    <property type="term" value="C:ribosome"/>
    <property type="evidence" value="ECO:0007669"/>
    <property type="project" value="UniProtKB-KW"/>
</dbReference>
<dbReference type="GO" id="GO:0003735">
    <property type="term" value="F:structural constituent of ribosome"/>
    <property type="evidence" value="ECO:0007669"/>
    <property type="project" value="InterPro"/>
</dbReference>
<dbReference type="GO" id="GO:0000049">
    <property type="term" value="F:tRNA binding"/>
    <property type="evidence" value="ECO:0007669"/>
    <property type="project" value="UniProtKB-UniRule"/>
</dbReference>
<dbReference type="GO" id="GO:0006412">
    <property type="term" value="P:translation"/>
    <property type="evidence" value="ECO:0007669"/>
    <property type="project" value="UniProtKB-UniRule"/>
</dbReference>
<dbReference type="FunFam" id="3.30.70.600:FF:000001">
    <property type="entry name" value="30S ribosomal protein S10"/>
    <property type="match status" value="1"/>
</dbReference>
<dbReference type="Gene3D" id="3.30.70.600">
    <property type="entry name" value="Ribosomal protein S10 domain"/>
    <property type="match status" value="1"/>
</dbReference>
<dbReference type="HAMAP" id="MF_00508">
    <property type="entry name" value="Ribosomal_uS10"/>
    <property type="match status" value="1"/>
</dbReference>
<dbReference type="InterPro" id="IPR001848">
    <property type="entry name" value="Ribosomal_uS10"/>
</dbReference>
<dbReference type="InterPro" id="IPR018268">
    <property type="entry name" value="Ribosomal_uS10_CS"/>
</dbReference>
<dbReference type="InterPro" id="IPR027486">
    <property type="entry name" value="Ribosomal_uS10_dom"/>
</dbReference>
<dbReference type="InterPro" id="IPR036838">
    <property type="entry name" value="Ribosomal_uS10_dom_sf"/>
</dbReference>
<dbReference type="NCBIfam" id="NF001861">
    <property type="entry name" value="PRK00596.1"/>
    <property type="match status" value="1"/>
</dbReference>
<dbReference type="NCBIfam" id="TIGR01049">
    <property type="entry name" value="rpsJ_bact"/>
    <property type="match status" value="1"/>
</dbReference>
<dbReference type="PANTHER" id="PTHR11700">
    <property type="entry name" value="30S RIBOSOMAL PROTEIN S10 FAMILY MEMBER"/>
    <property type="match status" value="1"/>
</dbReference>
<dbReference type="Pfam" id="PF00338">
    <property type="entry name" value="Ribosomal_S10"/>
    <property type="match status" value="1"/>
</dbReference>
<dbReference type="PRINTS" id="PR00971">
    <property type="entry name" value="RIBOSOMALS10"/>
</dbReference>
<dbReference type="SMART" id="SM01403">
    <property type="entry name" value="Ribosomal_S10"/>
    <property type="match status" value="1"/>
</dbReference>
<dbReference type="SUPFAM" id="SSF54999">
    <property type="entry name" value="Ribosomal protein S10"/>
    <property type="match status" value="1"/>
</dbReference>
<dbReference type="PROSITE" id="PS00361">
    <property type="entry name" value="RIBOSOMAL_S10"/>
    <property type="match status" value="1"/>
</dbReference>
<protein>
    <recommendedName>
        <fullName evidence="1">Small ribosomal subunit protein uS10</fullName>
    </recommendedName>
    <alternativeName>
        <fullName evidence="2">30S ribosomal protein S10</fullName>
    </alternativeName>
</protein>
<proteinExistence type="inferred from homology"/>
<accession>Q253F2</accession>
<reference key="1">
    <citation type="journal article" date="2006" name="DNA Res.">
        <title>Genome sequence of the cat pathogen, Chlamydophila felis.</title>
        <authorList>
            <person name="Azuma Y."/>
            <person name="Hirakawa H."/>
            <person name="Yamashita A."/>
            <person name="Cai Y."/>
            <person name="Rahman M.A."/>
            <person name="Suzuki H."/>
            <person name="Mitaku S."/>
            <person name="Toh H."/>
            <person name="Goto S."/>
            <person name="Murakami T."/>
            <person name="Sugi K."/>
            <person name="Hayashi H."/>
            <person name="Fukushi H."/>
            <person name="Hattori M."/>
            <person name="Kuhara S."/>
            <person name="Shirai M."/>
        </authorList>
    </citation>
    <scope>NUCLEOTIDE SEQUENCE [LARGE SCALE GENOMIC DNA]</scope>
    <source>
        <strain>Fe/C-56</strain>
    </source>
</reference>
<name>RS10_CHLFF</name>
<feature type="chain" id="PRO_0000258540" description="Small ribosomal subunit protein uS10">
    <location>
        <begin position="1"/>
        <end position="105"/>
    </location>
</feature>
<gene>
    <name evidence="1" type="primary">rpsJ</name>
    <name type="ordered locus">CF0814</name>
</gene>
<comment type="function">
    <text evidence="1">Involved in the binding of tRNA to the ribosomes.</text>
</comment>
<comment type="subunit">
    <text evidence="1">Part of the 30S ribosomal subunit.</text>
</comment>
<comment type="similarity">
    <text evidence="1">Belongs to the universal ribosomal protein uS10 family.</text>
</comment>
<comment type="sequence caution" evidence="2">
    <conflict type="erroneous initiation">
        <sequence resource="EMBL-CDS" id="BAE81586"/>
    </conflict>
</comment>
<evidence type="ECO:0000255" key="1">
    <source>
        <dbReference type="HAMAP-Rule" id="MF_00508"/>
    </source>
</evidence>
<evidence type="ECO:0000305" key="2"/>